<organism>
    <name type="scientific">Burkholderia pseudomallei (strain 1106a)</name>
    <dbReference type="NCBI Taxonomy" id="357348"/>
    <lineage>
        <taxon>Bacteria</taxon>
        <taxon>Pseudomonadati</taxon>
        <taxon>Pseudomonadota</taxon>
        <taxon>Betaproteobacteria</taxon>
        <taxon>Burkholderiales</taxon>
        <taxon>Burkholderiaceae</taxon>
        <taxon>Burkholderia</taxon>
        <taxon>pseudomallei group</taxon>
    </lineage>
</organism>
<evidence type="ECO:0000255" key="1">
    <source>
        <dbReference type="HAMAP-Rule" id="MF_01385"/>
    </source>
</evidence>
<evidence type="ECO:0000305" key="2"/>
<dbReference type="EMBL" id="CP000572">
    <property type="protein sequence ID" value="ABN89480.1"/>
    <property type="status" value="ALT_INIT"/>
    <property type="molecule type" value="Genomic_DNA"/>
</dbReference>
<dbReference type="RefSeq" id="WP_004533998.1">
    <property type="nucleotide sequence ID" value="NC_009076.1"/>
</dbReference>
<dbReference type="SMR" id="A3NYD1"/>
<dbReference type="KEGG" id="bpl:BURPS1106A_3114"/>
<dbReference type="HOGENOM" id="CLU_049215_2_1_4"/>
<dbReference type="Proteomes" id="UP000006738">
    <property type="component" value="Chromosome I"/>
</dbReference>
<dbReference type="GO" id="GO:0005737">
    <property type="term" value="C:cytoplasm"/>
    <property type="evidence" value="ECO:0007669"/>
    <property type="project" value="UniProtKB-SubCell"/>
</dbReference>
<dbReference type="GO" id="GO:0016151">
    <property type="term" value="F:nickel cation binding"/>
    <property type="evidence" value="ECO:0007669"/>
    <property type="project" value="UniProtKB-UniRule"/>
</dbReference>
<dbReference type="Gene3D" id="1.10.4190.10">
    <property type="entry name" value="Urease accessory protein UreF"/>
    <property type="match status" value="1"/>
</dbReference>
<dbReference type="HAMAP" id="MF_01385">
    <property type="entry name" value="UreF"/>
    <property type="match status" value="1"/>
</dbReference>
<dbReference type="InterPro" id="IPR002639">
    <property type="entry name" value="UreF"/>
</dbReference>
<dbReference type="InterPro" id="IPR038277">
    <property type="entry name" value="UreF_sf"/>
</dbReference>
<dbReference type="PANTHER" id="PTHR33620">
    <property type="entry name" value="UREASE ACCESSORY PROTEIN F"/>
    <property type="match status" value="1"/>
</dbReference>
<dbReference type="PANTHER" id="PTHR33620:SF1">
    <property type="entry name" value="UREASE ACCESSORY PROTEIN F"/>
    <property type="match status" value="1"/>
</dbReference>
<dbReference type="Pfam" id="PF01730">
    <property type="entry name" value="UreF"/>
    <property type="match status" value="1"/>
</dbReference>
<dbReference type="PIRSF" id="PIRSF009467">
    <property type="entry name" value="Ureas_acces_UreF"/>
    <property type="match status" value="1"/>
</dbReference>
<proteinExistence type="inferred from homology"/>
<keyword id="KW-0143">Chaperone</keyword>
<keyword id="KW-0963">Cytoplasm</keyword>
<keyword id="KW-0996">Nickel insertion</keyword>
<feature type="chain" id="PRO_0000344106" description="Urease accessory protein UreF">
    <location>
        <begin position="1"/>
        <end position="226"/>
    </location>
</feature>
<protein>
    <recommendedName>
        <fullName evidence="1">Urease accessory protein UreF</fullName>
    </recommendedName>
</protein>
<name>UREF_BURP0</name>
<gene>
    <name evidence="1" type="primary">ureF</name>
    <name type="ordered locus">BURPS1106A_3114</name>
</gene>
<sequence>MDTAELVALLHLASPALPIGAFSYSQGLEAALDAPLIRDADGARDWIASGLADVLAQGELPFLAHQLARWHAHDAAALADANDEFVASRESFELRRETEQMGWSLAQLCASLEWGDAARRATLASIPSVALPSAFAFAAAAHGATPDAALAAYAFGWVENQTAAAIKAVPLGQLAGQKIIVALREPIRDAVRRALATPPEAINTFAPQLGILSARHESQYSRLFRS</sequence>
<comment type="function">
    <text evidence="1">Required for maturation of urease via the functional incorporation of the urease nickel metallocenter.</text>
</comment>
<comment type="subunit">
    <text evidence="1">UreD, UreF and UreG form a complex that acts as a GTP-hydrolysis-dependent molecular chaperone, activating the urease apoprotein by helping to assemble the nickel containing metallocenter of UreC. The UreE protein probably delivers the nickel.</text>
</comment>
<comment type="subcellular location">
    <subcellularLocation>
        <location evidence="1">Cytoplasm</location>
    </subcellularLocation>
</comment>
<comment type="similarity">
    <text evidence="1">Belongs to the UreF family.</text>
</comment>
<comment type="sequence caution" evidence="2">
    <conflict type="erroneous initiation">
        <sequence resource="EMBL-CDS" id="ABN89480"/>
    </conflict>
</comment>
<reference key="1">
    <citation type="journal article" date="2010" name="Genome Biol. Evol.">
        <title>Continuing evolution of Burkholderia mallei through genome reduction and large-scale rearrangements.</title>
        <authorList>
            <person name="Losada L."/>
            <person name="Ronning C.M."/>
            <person name="DeShazer D."/>
            <person name="Woods D."/>
            <person name="Fedorova N."/>
            <person name="Kim H.S."/>
            <person name="Shabalina S.A."/>
            <person name="Pearson T.R."/>
            <person name="Brinkac L."/>
            <person name="Tan P."/>
            <person name="Nandi T."/>
            <person name="Crabtree J."/>
            <person name="Badger J."/>
            <person name="Beckstrom-Sternberg S."/>
            <person name="Saqib M."/>
            <person name="Schutzer S.E."/>
            <person name="Keim P."/>
            <person name="Nierman W.C."/>
        </authorList>
    </citation>
    <scope>NUCLEOTIDE SEQUENCE [LARGE SCALE GENOMIC DNA]</scope>
    <source>
        <strain>1106a</strain>
    </source>
</reference>
<accession>A3NYD1</accession>